<dbReference type="EC" id="6.1.1.6" evidence="1"/>
<dbReference type="EMBL" id="AE017125">
    <property type="protein sequence ID" value="AAP78263.1"/>
    <property type="molecule type" value="Genomic_DNA"/>
</dbReference>
<dbReference type="RefSeq" id="WP_011116505.1">
    <property type="nucleotide sequence ID" value="NC_004917.1"/>
</dbReference>
<dbReference type="SMR" id="Q7VFL0"/>
<dbReference type="STRING" id="235279.HH_1666"/>
<dbReference type="KEGG" id="hhe:HH_1666"/>
<dbReference type="eggNOG" id="COG1190">
    <property type="taxonomic scope" value="Bacteria"/>
</dbReference>
<dbReference type="HOGENOM" id="CLU_008255_6_0_7"/>
<dbReference type="OrthoDB" id="9801152at2"/>
<dbReference type="Proteomes" id="UP000002495">
    <property type="component" value="Chromosome"/>
</dbReference>
<dbReference type="GO" id="GO:0005829">
    <property type="term" value="C:cytosol"/>
    <property type="evidence" value="ECO:0007669"/>
    <property type="project" value="TreeGrafter"/>
</dbReference>
<dbReference type="GO" id="GO:0005524">
    <property type="term" value="F:ATP binding"/>
    <property type="evidence" value="ECO:0007669"/>
    <property type="project" value="UniProtKB-UniRule"/>
</dbReference>
<dbReference type="GO" id="GO:0004824">
    <property type="term" value="F:lysine-tRNA ligase activity"/>
    <property type="evidence" value="ECO:0007669"/>
    <property type="project" value="UniProtKB-UniRule"/>
</dbReference>
<dbReference type="GO" id="GO:0000287">
    <property type="term" value="F:magnesium ion binding"/>
    <property type="evidence" value="ECO:0007669"/>
    <property type="project" value="UniProtKB-UniRule"/>
</dbReference>
<dbReference type="GO" id="GO:0000049">
    <property type="term" value="F:tRNA binding"/>
    <property type="evidence" value="ECO:0007669"/>
    <property type="project" value="TreeGrafter"/>
</dbReference>
<dbReference type="GO" id="GO:0006430">
    <property type="term" value="P:lysyl-tRNA aminoacylation"/>
    <property type="evidence" value="ECO:0007669"/>
    <property type="project" value="UniProtKB-UniRule"/>
</dbReference>
<dbReference type="CDD" id="cd00775">
    <property type="entry name" value="LysRS_core"/>
    <property type="match status" value="1"/>
</dbReference>
<dbReference type="CDD" id="cd04322">
    <property type="entry name" value="LysRS_N"/>
    <property type="match status" value="1"/>
</dbReference>
<dbReference type="Gene3D" id="3.30.930.10">
    <property type="entry name" value="Bira Bifunctional Protein, Domain 2"/>
    <property type="match status" value="1"/>
</dbReference>
<dbReference type="Gene3D" id="2.40.50.140">
    <property type="entry name" value="Nucleic acid-binding proteins"/>
    <property type="match status" value="1"/>
</dbReference>
<dbReference type="HAMAP" id="MF_00252">
    <property type="entry name" value="Lys_tRNA_synth_class2"/>
    <property type="match status" value="1"/>
</dbReference>
<dbReference type="InterPro" id="IPR004364">
    <property type="entry name" value="Aa-tRNA-synt_II"/>
</dbReference>
<dbReference type="InterPro" id="IPR006195">
    <property type="entry name" value="aa-tRNA-synth_II"/>
</dbReference>
<dbReference type="InterPro" id="IPR045864">
    <property type="entry name" value="aa-tRNA-synth_II/BPL/LPL"/>
</dbReference>
<dbReference type="InterPro" id="IPR002313">
    <property type="entry name" value="Lys-tRNA-ligase_II"/>
</dbReference>
<dbReference type="InterPro" id="IPR044136">
    <property type="entry name" value="Lys-tRNA-ligase_II_N"/>
</dbReference>
<dbReference type="InterPro" id="IPR018149">
    <property type="entry name" value="Lys-tRNA-synth_II_C"/>
</dbReference>
<dbReference type="InterPro" id="IPR012340">
    <property type="entry name" value="NA-bd_OB-fold"/>
</dbReference>
<dbReference type="InterPro" id="IPR004365">
    <property type="entry name" value="NA-bd_OB_tRNA"/>
</dbReference>
<dbReference type="NCBIfam" id="TIGR00499">
    <property type="entry name" value="lysS_bact"/>
    <property type="match status" value="1"/>
</dbReference>
<dbReference type="NCBIfam" id="NF001756">
    <property type="entry name" value="PRK00484.1"/>
    <property type="match status" value="1"/>
</dbReference>
<dbReference type="PANTHER" id="PTHR42918:SF15">
    <property type="entry name" value="LYSINE--TRNA LIGASE, CHLOROPLASTIC_MITOCHONDRIAL"/>
    <property type="match status" value="1"/>
</dbReference>
<dbReference type="PANTHER" id="PTHR42918">
    <property type="entry name" value="LYSYL-TRNA SYNTHETASE"/>
    <property type="match status" value="1"/>
</dbReference>
<dbReference type="Pfam" id="PF00152">
    <property type="entry name" value="tRNA-synt_2"/>
    <property type="match status" value="1"/>
</dbReference>
<dbReference type="Pfam" id="PF01336">
    <property type="entry name" value="tRNA_anti-codon"/>
    <property type="match status" value="1"/>
</dbReference>
<dbReference type="PRINTS" id="PR00982">
    <property type="entry name" value="TRNASYNTHLYS"/>
</dbReference>
<dbReference type="SUPFAM" id="SSF55681">
    <property type="entry name" value="Class II aaRS and biotin synthetases"/>
    <property type="match status" value="1"/>
</dbReference>
<dbReference type="SUPFAM" id="SSF50249">
    <property type="entry name" value="Nucleic acid-binding proteins"/>
    <property type="match status" value="1"/>
</dbReference>
<dbReference type="PROSITE" id="PS50862">
    <property type="entry name" value="AA_TRNA_LIGASE_II"/>
    <property type="match status" value="1"/>
</dbReference>
<evidence type="ECO:0000255" key="1">
    <source>
        <dbReference type="HAMAP-Rule" id="MF_00252"/>
    </source>
</evidence>
<feature type="chain" id="PRO_0000152635" description="Lysine--tRNA ligase">
    <location>
        <begin position="1"/>
        <end position="518"/>
    </location>
</feature>
<feature type="binding site" evidence="1">
    <location>
        <position position="407"/>
    </location>
    <ligand>
        <name>Mg(2+)</name>
        <dbReference type="ChEBI" id="CHEBI:18420"/>
        <label>1</label>
    </ligand>
</feature>
<feature type="binding site" evidence="1">
    <location>
        <position position="414"/>
    </location>
    <ligand>
        <name>Mg(2+)</name>
        <dbReference type="ChEBI" id="CHEBI:18420"/>
        <label>1</label>
    </ligand>
</feature>
<feature type="binding site" evidence="1">
    <location>
        <position position="414"/>
    </location>
    <ligand>
        <name>Mg(2+)</name>
        <dbReference type="ChEBI" id="CHEBI:18420"/>
        <label>2</label>
    </ligand>
</feature>
<name>SYK_HELHP</name>
<proteinExistence type="inferred from homology"/>
<comment type="catalytic activity">
    <reaction evidence="1">
        <text>tRNA(Lys) + L-lysine + ATP = L-lysyl-tRNA(Lys) + AMP + diphosphate</text>
        <dbReference type="Rhea" id="RHEA:20792"/>
        <dbReference type="Rhea" id="RHEA-COMP:9696"/>
        <dbReference type="Rhea" id="RHEA-COMP:9697"/>
        <dbReference type="ChEBI" id="CHEBI:30616"/>
        <dbReference type="ChEBI" id="CHEBI:32551"/>
        <dbReference type="ChEBI" id="CHEBI:33019"/>
        <dbReference type="ChEBI" id="CHEBI:78442"/>
        <dbReference type="ChEBI" id="CHEBI:78529"/>
        <dbReference type="ChEBI" id="CHEBI:456215"/>
        <dbReference type="EC" id="6.1.1.6"/>
    </reaction>
</comment>
<comment type="cofactor">
    <cofactor evidence="1">
        <name>Mg(2+)</name>
        <dbReference type="ChEBI" id="CHEBI:18420"/>
    </cofactor>
    <text evidence="1">Binds 3 Mg(2+) ions per subunit.</text>
</comment>
<comment type="subunit">
    <text evidence="1">Homodimer.</text>
</comment>
<comment type="subcellular location">
    <subcellularLocation>
        <location evidence="1">Cytoplasm</location>
    </subcellularLocation>
</comment>
<comment type="similarity">
    <text evidence="1">Belongs to the class-II aminoacyl-tRNA synthetase family.</text>
</comment>
<protein>
    <recommendedName>
        <fullName evidence="1">Lysine--tRNA ligase</fullName>
        <ecNumber evidence="1">6.1.1.6</ecNumber>
    </recommendedName>
    <alternativeName>
        <fullName evidence="1">Lysyl-tRNA synthetase</fullName>
        <shortName evidence="1">LysRS</shortName>
    </alternativeName>
</protein>
<reference key="1">
    <citation type="journal article" date="2003" name="Proc. Natl. Acad. Sci. U.S.A.">
        <title>The complete genome sequence of the carcinogenic bacterium Helicobacter hepaticus.</title>
        <authorList>
            <person name="Suerbaum S."/>
            <person name="Josenhans C."/>
            <person name="Sterzenbach T."/>
            <person name="Drescher B."/>
            <person name="Brandt P."/>
            <person name="Bell M."/>
            <person name="Droege M."/>
            <person name="Fartmann B."/>
            <person name="Fischer H.-P."/>
            <person name="Ge Z."/>
            <person name="Hoerster A."/>
            <person name="Holland R."/>
            <person name="Klein K."/>
            <person name="Koenig J."/>
            <person name="Macko L."/>
            <person name="Mendz G.L."/>
            <person name="Nyakatura G."/>
            <person name="Schauer D.B."/>
            <person name="Shen Z."/>
            <person name="Weber J."/>
            <person name="Frosch M."/>
            <person name="Fox J.G."/>
        </authorList>
    </citation>
    <scope>NUCLEOTIDE SEQUENCE [LARGE SCALE GENOMIC DNA]</scope>
    <source>
        <strain>ATCC 51449 / 3B1</strain>
    </source>
</reference>
<sequence length="518" mass="59739">MFSNFYVQQRIKKMELMRQEGFNPYANKTTRTISNYNFLNKYNHLKMQSSDDTQDCTQNKEIESIVGRVRFIRLMGKACFIKIQDESGILQAYVSKNDIGEDFLLIKKVLEVGDIINVSGYAFVTKTGELSIHTLTLQILTKSIVPLPEKFHGLNDIELRYRQRYVDLIVNNKVKETFKLRSQIVSCIRQFFEQKGFLEVETPMLHSIPGGANARPFITHHNALDVDRYLRIAPELYLKRLIVGGFEAIFELNRNFRNEGMDHSHNPEFSMIEFYWAYKTYEDLITLTQELFAFLFKKLNLPHSLIHDELEIDFSQWHIIGYKEALIKIGGLDKNIIDNQDALLSFLMSKHLKVDKSMSYGKLLGEAFDEFVEHKLINPTFITQYPIEISPLARRNDENPNVADRFELFIGGKEIANGFSELNDPIDQFERFKEQAKAKDAGDEEAQYMDEDYVWALAHGMPPTAGEGIGIDRLVMLLSNAKTIKDVILFPALKPTKSNFDIILSQDALSNAQIIKEN</sequence>
<gene>
    <name evidence="1" type="primary">lysS</name>
    <name type="ordered locus">HH_1666</name>
</gene>
<organism>
    <name type="scientific">Helicobacter hepaticus (strain ATCC 51449 / 3B1)</name>
    <dbReference type="NCBI Taxonomy" id="235279"/>
    <lineage>
        <taxon>Bacteria</taxon>
        <taxon>Pseudomonadati</taxon>
        <taxon>Campylobacterota</taxon>
        <taxon>Epsilonproteobacteria</taxon>
        <taxon>Campylobacterales</taxon>
        <taxon>Helicobacteraceae</taxon>
        <taxon>Helicobacter</taxon>
    </lineage>
</organism>
<accession>Q7VFL0</accession>
<keyword id="KW-0030">Aminoacyl-tRNA synthetase</keyword>
<keyword id="KW-0067">ATP-binding</keyword>
<keyword id="KW-0963">Cytoplasm</keyword>
<keyword id="KW-0436">Ligase</keyword>
<keyword id="KW-0460">Magnesium</keyword>
<keyword id="KW-0479">Metal-binding</keyword>
<keyword id="KW-0547">Nucleotide-binding</keyword>
<keyword id="KW-0648">Protein biosynthesis</keyword>
<keyword id="KW-1185">Reference proteome</keyword>